<proteinExistence type="evidence at protein level"/>
<name>ALCP_BACP3</name>
<feature type="chain" id="PRO_0000161563" description="Sodium/proton-dependent alanine carrier protein">
    <location>
        <begin position="1"/>
        <end position="445"/>
    </location>
</feature>
<feature type="transmembrane region" description="Helical" evidence="1">
    <location>
        <begin position="41"/>
        <end position="61"/>
    </location>
</feature>
<feature type="transmembrane region" description="Helical" evidence="1">
    <location>
        <begin position="103"/>
        <end position="123"/>
    </location>
</feature>
<feature type="transmembrane region" description="Helical" evidence="1">
    <location>
        <begin position="129"/>
        <end position="149"/>
    </location>
</feature>
<feature type="transmembrane region" description="Helical" evidence="1">
    <location>
        <begin position="159"/>
        <end position="179"/>
    </location>
</feature>
<feature type="transmembrane region" description="Helical" evidence="1">
    <location>
        <begin position="188"/>
        <end position="208"/>
    </location>
</feature>
<feature type="transmembrane region" description="Helical" evidence="1">
    <location>
        <begin position="249"/>
        <end position="269"/>
    </location>
</feature>
<feature type="transmembrane region" description="Helical" evidence="1">
    <location>
        <begin position="304"/>
        <end position="324"/>
    </location>
</feature>
<feature type="transmembrane region" description="Helical" evidence="1">
    <location>
        <begin position="349"/>
        <end position="369"/>
    </location>
</feature>
<feature type="transmembrane region" description="Helical" evidence="1">
    <location>
        <begin position="375"/>
        <end position="395"/>
    </location>
</feature>
<sequence length="445" mass="47804">MIRLVTMGKSSEAGVSSFQALTMSLSGRIGVGNVAGTATGIAYGGPGAVFWMWVITFIGAATAYVESTWRKFIKRNKTDNTVAVRRSTLKKALAGNGLRCSRAAIILSMAVLMPGIQANSIADSFSNAFGIPKLVTGIFVIAVLGFTIFGGVKRIAKTAEIVVPFMAVGYLFVAIAIIAANIEKVPDVFGLIFKSAFGADQVFGGILGSAVMWGVKRGLYANEAGQGTGAHPAAAAEVSHPAKQGLVQAFSIYLDVFLVVTATALMILFTGQYNVINEKTGETIVEHLKGVEPGAGYTQAAVDTLFPGFGSAFIAIALFFFAFTTMYAYYYIAETNLAYLVRSEKRGTAFFALKLVFLAATFYGTVKTATTAWAMGDIGLGIMVWLNLIAILLLFKPAYMALKDYEEQLKQGKDPEFNASKYGIKNAKFWENGYKRWEEKKGKAL</sequence>
<dbReference type="EMBL" id="D12512">
    <property type="protein sequence ID" value="BAA02075.1"/>
    <property type="molecule type" value="Genomic_DNA"/>
</dbReference>
<dbReference type="SMR" id="P30145"/>
<dbReference type="TCDB" id="2.A.25.1.2">
    <property type="family name" value="the alanine or glycine:cation symporter (agcs) family"/>
</dbReference>
<dbReference type="GO" id="GO:0005886">
    <property type="term" value="C:plasma membrane"/>
    <property type="evidence" value="ECO:0007669"/>
    <property type="project" value="UniProtKB-SubCell"/>
</dbReference>
<dbReference type="GO" id="GO:0005283">
    <property type="term" value="F:amino acid:sodium symporter activity"/>
    <property type="evidence" value="ECO:0007669"/>
    <property type="project" value="InterPro"/>
</dbReference>
<dbReference type="FunFam" id="1.20.1740.10:FF:000004">
    <property type="entry name" value="Sodium:alanine symporter family protein"/>
    <property type="match status" value="1"/>
</dbReference>
<dbReference type="InterPro" id="IPR001463">
    <property type="entry name" value="Na/Ala_symport"/>
</dbReference>
<dbReference type="NCBIfam" id="TIGR00835">
    <property type="entry name" value="agcS"/>
    <property type="match status" value="1"/>
</dbReference>
<dbReference type="PANTHER" id="PTHR30330">
    <property type="entry name" value="AGSS FAMILY TRANSPORTER, SODIUM-ALANINE"/>
    <property type="match status" value="1"/>
</dbReference>
<dbReference type="PANTHER" id="PTHR30330:SF7">
    <property type="entry name" value="SODIUM_PROTON-DEPENDENT ALANINE CARRIER PROTEIN YRBD-RELATED"/>
    <property type="match status" value="1"/>
</dbReference>
<dbReference type="Pfam" id="PF01235">
    <property type="entry name" value="Na_Ala_symp"/>
    <property type="match status" value="1"/>
</dbReference>
<dbReference type="PRINTS" id="PR00175">
    <property type="entry name" value="NAALASMPORT"/>
</dbReference>
<dbReference type="PROSITE" id="PS00873">
    <property type="entry name" value="NA_ALANINE_SYMP"/>
    <property type="match status" value="1"/>
</dbReference>
<evidence type="ECO:0000255" key="1"/>
<evidence type="ECO:0000269" key="2">
    <source>
    </source>
</evidence>
<evidence type="ECO:0000303" key="3">
    <source>
    </source>
</evidence>
<evidence type="ECO:0000305" key="4"/>
<comment type="function">
    <text evidence="2">Mediates the active transport of alanine, driven by either an H(+) or Na(+) gradient.</text>
</comment>
<comment type="subcellular location">
    <subcellularLocation>
        <location evidence="2">Cell membrane</location>
        <topology evidence="1">Multi-pass membrane protein</topology>
    </subcellularLocation>
</comment>
<comment type="PTM">
    <text evidence="2">The N-terminus is blocked.</text>
</comment>
<comment type="similarity">
    <text evidence="4">Belongs to the alanine or glycine:cation symporter (AGCS) (TC 2.A.25) family.</text>
</comment>
<organism>
    <name type="scientific">Bacillus sp. (strain PS3)</name>
    <dbReference type="NCBI Taxonomy" id="2334"/>
    <lineage>
        <taxon>Bacteria</taxon>
        <taxon>Bacillati</taxon>
        <taxon>Bacillota</taxon>
        <taxon>Bacilli</taxon>
        <taxon>Bacillales</taxon>
        <taxon>Bacillaceae</taxon>
        <taxon>Bacillus</taxon>
    </lineage>
</organism>
<protein>
    <recommendedName>
        <fullName evidence="4">Sodium/proton-dependent alanine carrier protein</fullName>
    </recommendedName>
</protein>
<gene>
    <name evidence="3" type="primary">acp</name>
</gene>
<reference key="1">
    <citation type="journal article" date="1992" name="J. Biol. Chem.">
        <title>Primary structure of the alanine carrier protein of thermophilic bacterium PS3.</title>
        <authorList>
            <person name="Kamata H."/>
            <person name="Akiyama S."/>
            <person name="Morosawa H."/>
            <person name="Ohta T."/>
            <person name="Hamamoto T."/>
            <person name="Kambe T."/>
            <person name="Kagawa Y."/>
            <person name="Hirata H."/>
        </authorList>
    </citation>
    <scope>NUCLEOTIDE SEQUENCE [GENOMIC DNA]</scope>
    <scope>PARTIAL PROTEIN SEQUENCE</scope>
</reference>
<reference key="2">
    <citation type="journal article" date="1984" name="J. Biol. Chem.">
        <title>A purified alanine carrier composed of a single polypeptide from thermophilic bacterium PS3 driven by either proton or sodium ion gradient.</title>
        <authorList>
            <person name="Hirata H."/>
            <person name="Kambe T."/>
            <person name="Kagawa Y."/>
        </authorList>
    </citation>
    <scope>FUNCTION</scope>
    <scope>SUBCELLULAR LOCATION</scope>
    <scope>BLOCKED N-TERMINUS</scope>
    <source>
        <strain>PS3</strain>
    </source>
</reference>
<accession>P30145</accession>
<keyword id="KW-0029">Amino-acid transport</keyword>
<keyword id="KW-1003">Cell membrane</keyword>
<keyword id="KW-0903">Direct protein sequencing</keyword>
<keyword id="KW-0406">Ion transport</keyword>
<keyword id="KW-0472">Membrane</keyword>
<keyword id="KW-0915">Sodium</keyword>
<keyword id="KW-0739">Sodium transport</keyword>
<keyword id="KW-0769">Symport</keyword>
<keyword id="KW-0812">Transmembrane</keyword>
<keyword id="KW-1133">Transmembrane helix</keyword>
<keyword id="KW-0813">Transport</keyword>